<feature type="peptide" id="PRO_0000043952" description="Gonadoliberin-2">
    <location>
        <begin position="1"/>
        <end position="10"/>
    </location>
</feature>
<feature type="modified residue" description="Pyrrolidone carboxylic acid" evidence="1">
    <location>
        <position position="1"/>
    </location>
</feature>
<feature type="modified residue" description="Glycine amide" evidence="1">
    <location>
        <position position="10"/>
    </location>
</feature>
<keyword id="KW-0027">Amidation</keyword>
<keyword id="KW-0903">Direct protein sequencing</keyword>
<keyword id="KW-0372">Hormone</keyword>
<keyword id="KW-0873">Pyrrolidone carboxylic acid</keyword>
<keyword id="KW-0964">Secreted</keyword>
<sequence length="10" mass="1254">QHWSHGWYPG</sequence>
<accession>P68076</accession>
<accession>P20408</accession>
<accession>P37043</accession>
<accession>P81750</accession>
<reference key="1">
    <citation type="journal article" date="1991" name="Gen. Comp. Endocrinol.">
        <title>Primary structure of gonadotropin-releasing hormone from the brain of a holocephalan (ratfish: Hydrolagus colliei).</title>
        <authorList>
            <person name="Lovejoy D.A."/>
            <person name="Sherwood N.M."/>
            <person name="Fischer W.H."/>
            <person name="Jackson B.C."/>
            <person name="Rivier J.E."/>
            <person name="Lee T."/>
        </authorList>
    </citation>
    <scope>PROTEIN SEQUENCE</scope>
    <scope>PYROGLUTAMATE FORMATION AT GLN-1</scope>
    <scope>AMIDATION AT GLY-10</scope>
    <source>
        <tissue>Brain</tissue>
    </source>
</reference>
<comment type="function">
    <text>Stimulates the secretion of gonadotropins.</text>
</comment>
<comment type="subcellular location">
    <subcellularLocation>
        <location>Secreted</location>
    </subcellularLocation>
</comment>
<comment type="similarity">
    <text evidence="2">Belongs to the GnRH family.</text>
</comment>
<gene>
    <name type="primary">gnrh2</name>
</gene>
<organism>
    <name type="scientific">Hydrolagus colliei</name>
    <name type="common">Spotted ratfish</name>
    <name type="synonym">Chimaera colliei</name>
    <dbReference type="NCBI Taxonomy" id="7873"/>
    <lineage>
        <taxon>Eukaryota</taxon>
        <taxon>Metazoa</taxon>
        <taxon>Chordata</taxon>
        <taxon>Craniata</taxon>
        <taxon>Vertebrata</taxon>
        <taxon>Chondrichthyes</taxon>
        <taxon>Holocephali</taxon>
        <taxon>Chimaeriformes</taxon>
        <taxon>Chimaeridae</taxon>
        <taxon>Hydrolagus</taxon>
    </lineage>
</organism>
<protein>
    <recommendedName>
        <fullName>Gonadoliberin-2</fullName>
    </recommendedName>
    <alternativeName>
        <fullName>Gonadoliberin II</fullName>
    </alternativeName>
    <alternativeName>
        <fullName>Gonadotropin-releasing hormone II</fullName>
        <shortName>GnRH-II</shortName>
    </alternativeName>
    <alternativeName>
        <fullName>Luliberin II</fullName>
    </alternativeName>
    <alternativeName>
        <fullName>Luteinizing hormone-releasing hormone II</fullName>
        <shortName>LH-RH II</shortName>
    </alternativeName>
</protein>
<name>GON2_HYDCO</name>
<evidence type="ECO:0000269" key="1">
    <source>
    </source>
</evidence>
<evidence type="ECO:0000305" key="2"/>
<dbReference type="PIR" id="A61126">
    <property type="entry name" value="A61126"/>
</dbReference>
<dbReference type="GO" id="GO:0005576">
    <property type="term" value="C:extracellular region"/>
    <property type="evidence" value="ECO:0007669"/>
    <property type="project" value="UniProtKB-SubCell"/>
</dbReference>
<dbReference type="GO" id="GO:0005179">
    <property type="term" value="F:hormone activity"/>
    <property type="evidence" value="ECO:0007669"/>
    <property type="project" value="UniProtKB-KW"/>
</dbReference>
<dbReference type="InterPro" id="IPR002012">
    <property type="entry name" value="GnRH"/>
</dbReference>
<dbReference type="Pfam" id="PF00446">
    <property type="entry name" value="GnRH"/>
    <property type="match status" value="1"/>
</dbReference>
<dbReference type="PROSITE" id="PS00473">
    <property type="entry name" value="GNRH"/>
    <property type="match status" value="1"/>
</dbReference>
<proteinExistence type="evidence at protein level"/>